<dbReference type="EC" id="6.1.1.17" evidence="1"/>
<dbReference type="EMBL" id="CP000891">
    <property type="protein sequence ID" value="ABX50113.1"/>
    <property type="molecule type" value="Genomic_DNA"/>
</dbReference>
<dbReference type="RefSeq" id="WP_006082293.1">
    <property type="nucleotide sequence ID" value="NC_009997.1"/>
</dbReference>
<dbReference type="SMR" id="A9KUU5"/>
<dbReference type="GeneID" id="11773029"/>
<dbReference type="KEGG" id="sbn:Sbal195_2947"/>
<dbReference type="HOGENOM" id="CLU_015768_6_3_6"/>
<dbReference type="Proteomes" id="UP000000770">
    <property type="component" value="Chromosome"/>
</dbReference>
<dbReference type="GO" id="GO:0005829">
    <property type="term" value="C:cytosol"/>
    <property type="evidence" value="ECO:0007669"/>
    <property type="project" value="TreeGrafter"/>
</dbReference>
<dbReference type="GO" id="GO:0005524">
    <property type="term" value="F:ATP binding"/>
    <property type="evidence" value="ECO:0007669"/>
    <property type="project" value="UniProtKB-UniRule"/>
</dbReference>
<dbReference type="GO" id="GO:0004818">
    <property type="term" value="F:glutamate-tRNA ligase activity"/>
    <property type="evidence" value="ECO:0007669"/>
    <property type="project" value="UniProtKB-UniRule"/>
</dbReference>
<dbReference type="GO" id="GO:0000049">
    <property type="term" value="F:tRNA binding"/>
    <property type="evidence" value="ECO:0007669"/>
    <property type="project" value="InterPro"/>
</dbReference>
<dbReference type="GO" id="GO:0008270">
    <property type="term" value="F:zinc ion binding"/>
    <property type="evidence" value="ECO:0007669"/>
    <property type="project" value="UniProtKB-UniRule"/>
</dbReference>
<dbReference type="GO" id="GO:0006424">
    <property type="term" value="P:glutamyl-tRNA aminoacylation"/>
    <property type="evidence" value="ECO:0007669"/>
    <property type="project" value="UniProtKB-UniRule"/>
</dbReference>
<dbReference type="CDD" id="cd00808">
    <property type="entry name" value="GluRS_core"/>
    <property type="match status" value="1"/>
</dbReference>
<dbReference type="FunFam" id="1.10.10.350:FF:000001">
    <property type="entry name" value="Glutamate--tRNA ligase"/>
    <property type="match status" value="1"/>
</dbReference>
<dbReference type="FunFam" id="3.40.50.620:FF:000007">
    <property type="entry name" value="Glutamate--tRNA ligase"/>
    <property type="match status" value="1"/>
</dbReference>
<dbReference type="Gene3D" id="1.10.10.350">
    <property type="match status" value="1"/>
</dbReference>
<dbReference type="Gene3D" id="3.40.50.620">
    <property type="entry name" value="HUPs"/>
    <property type="match status" value="1"/>
</dbReference>
<dbReference type="HAMAP" id="MF_00022">
    <property type="entry name" value="Glu_tRNA_synth_type1"/>
    <property type="match status" value="1"/>
</dbReference>
<dbReference type="InterPro" id="IPR045462">
    <property type="entry name" value="aa-tRNA-synth_I_cd-bd"/>
</dbReference>
<dbReference type="InterPro" id="IPR020751">
    <property type="entry name" value="aa-tRNA-synth_I_codon-bd_sub2"/>
</dbReference>
<dbReference type="InterPro" id="IPR001412">
    <property type="entry name" value="aa-tRNA-synth_I_CS"/>
</dbReference>
<dbReference type="InterPro" id="IPR008925">
    <property type="entry name" value="aa_tRNA-synth_I_cd-bd_sf"/>
</dbReference>
<dbReference type="InterPro" id="IPR004527">
    <property type="entry name" value="Glu-tRNA-ligase_bac/mito"/>
</dbReference>
<dbReference type="InterPro" id="IPR000924">
    <property type="entry name" value="Glu/Gln-tRNA-synth"/>
</dbReference>
<dbReference type="InterPro" id="IPR020058">
    <property type="entry name" value="Glu/Gln-tRNA-synth_Ib_cat-dom"/>
</dbReference>
<dbReference type="InterPro" id="IPR049940">
    <property type="entry name" value="GluQ/Sye"/>
</dbReference>
<dbReference type="InterPro" id="IPR033910">
    <property type="entry name" value="GluRS_core"/>
</dbReference>
<dbReference type="InterPro" id="IPR014729">
    <property type="entry name" value="Rossmann-like_a/b/a_fold"/>
</dbReference>
<dbReference type="NCBIfam" id="TIGR00464">
    <property type="entry name" value="gltX_bact"/>
    <property type="match status" value="1"/>
</dbReference>
<dbReference type="PANTHER" id="PTHR43311">
    <property type="entry name" value="GLUTAMATE--TRNA LIGASE"/>
    <property type="match status" value="1"/>
</dbReference>
<dbReference type="PANTHER" id="PTHR43311:SF2">
    <property type="entry name" value="GLUTAMATE--TRNA LIGASE, MITOCHONDRIAL-RELATED"/>
    <property type="match status" value="1"/>
</dbReference>
<dbReference type="Pfam" id="PF19269">
    <property type="entry name" value="Anticodon_2"/>
    <property type="match status" value="1"/>
</dbReference>
<dbReference type="Pfam" id="PF00749">
    <property type="entry name" value="tRNA-synt_1c"/>
    <property type="match status" value="1"/>
</dbReference>
<dbReference type="PRINTS" id="PR00987">
    <property type="entry name" value="TRNASYNTHGLU"/>
</dbReference>
<dbReference type="SUPFAM" id="SSF48163">
    <property type="entry name" value="An anticodon-binding domain of class I aminoacyl-tRNA synthetases"/>
    <property type="match status" value="1"/>
</dbReference>
<dbReference type="SUPFAM" id="SSF52374">
    <property type="entry name" value="Nucleotidylyl transferase"/>
    <property type="match status" value="1"/>
</dbReference>
<dbReference type="PROSITE" id="PS00178">
    <property type="entry name" value="AA_TRNA_LIGASE_I"/>
    <property type="match status" value="1"/>
</dbReference>
<accession>A9KUU5</accession>
<gene>
    <name evidence="1" type="primary">gltX</name>
    <name type="ordered locus">Sbal195_2947</name>
</gene>
<evidence type="ECO:0000255" key="1">
    <source>
        <dbReference type="HAMAP-Rule" id="MF_00022"/>
    </source>
</evidence>
<feature type="chain" id="PRO_1000074332" description="Glutamate--tRNA ligase">
    <location>
        <begin position="1"/>
        <end position="469"/>
    </location>
</feature>
<feature type="short sequence motif" description="'HIGH' region" evidence="1">
    <location>
        <begin position="9"/>
        <end position="19"/>
    </location>
</feature>
<feature type="short sequence motif" description="'KMSKS' region" evidence="1">
    <location>
        <begin position="236"/>
        <end position="240"/>
    </location>
</feature>
<feature type="binding site" evidence="1">
    <location>
        <position position="98"/>
    </location>
    <ligand>
        <name>Zn(2+)</name>
        <dbReference type="ChEBI" id="CHEBI:29105"/>
    </ligand>
</feature>
<feature type="binding site" evidence="1">
    <location>
        <position position="100"/>
    </location>
    <ligand>
        <name>Zn(2+)</name>
        <dbReference type="ChEBI" id="CHEBI:29105"/>
    </ligand>
</feature>
<feature type="binding site" evidence="1">
    <location>
        <position position="125"/>
    </location>
    <ligand>
        <name>Zn(2+)</name>
        <dbReference type="ChEBI" id="CHEBI:29105"/>
    </ligand>
</feature>
<feature type="binding site" evidence="1">
    <location>
        <position position="127"/>
    </location>
    <ligand>
        <name>Zn(2+)</name>
        <dbReference type="ChEBI" id="CHEBI:29105"/>
    </ligand>
</feature>
<feature type="binding site" evidence="1">
    <location>
        <position position="239"/>
    </location>
    <ligand>
        <name>ATP</name>
        <dbReference type="ChEBI" id="CHEBI:30616"/>
    </ligand>
</feature>
<proteinExistence type="inferred from homology"/>
<reference key="1">
    <citation type="submission" date="2007-11" db="EMBL/GenBank/DDBJ databases">
        <title>Complete sequence of chromosome of Shewanella baltica OS195.</title>
        <authorList>
            <consortium name="US DOE Joint Genome Institute"/>
            <person name="Copeland A."/>
            <person name="Lucas S."/>
            <person name="Lapidus A."/>
            <person name="Barry K."/>
            <person name="Glavina del Rio T."/>
            <person name="Dalin E."/>
            <person name="Tice H."/>
            <person name="Pitluck S."/>
            <person name="Chain P."/>
            <person name="Malfatti S."/>
            <person name="Shin M."/>
            <person name="Vergez L."/>
            <person name="Schmutz J."/>
            <person name="Larimer F."/>
            <person name="Land M."/>
            <person name="Hauser L."/>
            <person name="Kyrpides N."/>
            <person name="Kim E."/>
            <person name="Brettar I."/>
            <person name="Rodrigues J."/>
            <person name="Konstantinidis K."/>
            <person name="Klappenbach J."/>
            <person name="Hofle M."/>
            <person name="Tiedje J."/>
            <person name="Richardson P."/>
        </authorList>
    </citation>
    <scope>NUCLEOTIDE SEQUENCE [LARGE SCALE GENOMIC DNA]</scope>
    <source>
        <strain>OS195</strain>
    </source>
</reference>
<comment type="function">
    <text evidence="1">Catalyzes the attachment of glutamate to tRNA(Glu) in a two-step reaction: glutamate is first activated by ATP to form Glu-AMP and then transferred to the acceptor end of tRNA(Glu).</text>
</comment>
<comment type="catalytic activity">
    <reaction evidence="1">
        <text>tRNA(Glu) + L-glutamate + ATP = L-glutamyl-tRNA(Glu) + AMP + diphosphate</text>
        <dbReference type="Rhea" id="RHEA:23540"/>
        <dbReference type="Rhea" id="RHEA-COMP:9663"/>
        <dbReference type="Rhea" id="RHEA-COMP:9680"/>
        <dbReference type="ChEBI" id="CHEBI:29985"/>
        <dbReference type="ChEBI" id="CHEBI:30616"/>
        <dbReference type="ChEBI" id="CHEBI:33019"/>
        <dbReference type="ChEBI" id="CHEBI:78442"/>
        <dbReference type="ChEBI" id="CHEBI:78520"/>
        <dbReference type="ChEBI" id="CHEBI:456215"/>
        <dbReference type="EC" id="6.1.1.17"/>
    </reaction>
</comment>
<comment type="cofactor">
    <cofactor evidence="1">
        <name>Zn(2+)</name>
        <dbReference type="ChEBI" id="CHEBI:29105"/>
    </cofactor>
    <text evidence="1">Binds 1 zinc ion per subunit.</text>
</comment>
<comment type="subunit">
    <text evidence="1">Monomer.</text>
</comment>
<comment type="subcellular location">
    <subcellularLocation>
        <location evidence="1">Cytoplasm</location>
    </subcellularLocation>
</comment>
<comment type="similarity">
    <text evidence="1">Belongs to the class-I aminoacyl-tRNA synthetase family. Glutamate--tRNA ligase type 1 subfamily.</text>
</comment>
<keyword id="KW-0030">Aminoacyl-tRNA synthetase</keyword>
<keyword id="KW-0067">ATP-binding</keyword>
<keyword id="KW-0963">Cytoplasm</keyword>
<keyword id="KW-0436">Ligase</keyword>
<keyword id="KW-0479">Metal-binding</keyword>
<keyword id="KW-0547">Nucleotide-binding</keyword>
<keyword id="KW-0648">Protein biosynthesis</keyword>
<keyword id="KW-0862">Zinc</keyword>
<protein>
    <recommendedName>
        <fullName evidence="1">Glutamate--tRNA ligase</fullName>
        <ecNumber evidence="1">6.1.1.17</ecNumber>
    </recommendedName>
    <alternativeName>
        <fullName evidence="1">Glutamyl-tRNA synthetase</fullName>
        <shortName evidence="1">GluRS</shortName>
    </alternativeName>
</protein>
<name>SYE_SHEB9</name>
<organism>
    <name type="scientific">Shewanella baltica (strain OS195)</name>
    <dbReference type="NCBI Taxonomy" id="399599"/>
    <lineage>
        <taxon>Bacteria</taxon>
        <taxon>Pseudomonadati</taxon>
        <taxon>Pseudomonadota</taxon>
        <taxon>Gammaproteobacteria</taxon>
        <taxon>Alteromonadales</taxon>
        <taxon>Shewanellaceae</taxon>
        <taxon>Shewanella</taxon>
    </lineage>
</organism>
<sequence>MTTKTRFAPSPTGFLHVGGARTALYSWLQARANNGEFVLRIEDTDIERSTQAACDAILEGMNWLGLTWDEGPYYQTKRFDRYNEIIAQMLAKGTAYKCYCSRERIDALREAQAANGEAQKYDGCCRDLPARDTDEPFVVRFKNPIGGSVVFDDHVRGRIEFSNDALDDLIIARTDGVPTYNFCVVVDDWDMGITCVVRGEDHINNTPRQINILKALGAPIPEYAHVSMILGDDGAKLSKRHGAVSVMQYRDDGYLPEALLNYLVRLGWSHGDQEIFSLEEMKQYFKLGDINKAASAFNTDKLVWLNQHYIKSLAPEYVATHLQWHMDDQKIDLSNGPALAEVVTALAERAKTLKELAASSRYFYEDFAEFDEAQAKKHLRGVALEPLQLVQQKLAALTEWTVEAIHQAIEDTATELDVGMGKVGMPLRVAVTGAGQSPGLDITLFLIGRSRSEQRISKAIEFVADRINS</sequence>